<feature type="chain" id="PRO_1000013700" description="Probable M18 family aminopeptidase 2">
    <location>
        <begin position="1"/>
        <end position="429"/>
    </location>
</feature>
<feature type="binding site" evidence="1">
    <location>
        <position position="82"/>
    </location>
    <ligand>
        <name>Zn(2+)</name>
        <dbReference type="ChEBI" id="CHEBI:29105"/>
    </ligand>
</feature>
<feature type="binding site" evidence="1">
    <location>
        <position position="156"/>
    </location>
    <ligand>
        <name>Zn(2+)</name>
        <dbReference type="ChEBI" id="CHEBI:29105"/>
    </ligand>
</feature>
<feature type="binding site" evidence="1">
    <location>
        <position position="401"/>
    </location>
    <ligand>
        <name>Zn(2+)</name>
        <dbReference type="ChEBI" id="CHEBI:29105"/>
    </ligand>
</feature>
<keyword id="KW-0031">Aminopeptidase</keyword>
<keyword id="KW-0378">Hydrolase</keyword>
<keyword id="KW-0479">Metal-binding</keyword>
<keyword id="KW-0482">Metalloprotease</keyword>
<keyword id="KW-0645">Protease</keyword>
<keyword id="KW-0862">Zinc</keyword>
<proteinExistence type="inferred from homology"/>
<accession>Q48L80</accession>
<organism>
    <name type="scientific">Pseudomonas savastanoi pv. phaseolicola (strain 1448A / Race 6)</name>
    <name type="common">Pseudomonas syringae pv. phaseolicola (strain 1448A / Race 6)</name>
    <dbReference type="NCBI Taxonomy" id="264730"/>
    <lineage>
        <taxon>Bacteria</taxon>
        <taxon>Pseudomonadati</taxon>
        <taxon>Pseudomonadota</taxon>
        <taxon>Gammaproteobacteria</taxon>
        <taxon>Pseudomonadales</taxon>
        <taxon>Pseudomonadaceae</taxon>
        <taxon>Pseudomonas</taxon>
    </lineage>
</organism>
<protein>
    <recommendedName>
        <fullName evidence="1">Probable M18 family aminopeptidase 2</fullName>
        <ecNumber evidence="1">3.4.11.-</ecNumber>
    </recommendedName>
</protein>
<sequence>MRAELNNGLIDFLKASPTPFHATATLVQHFEAAGFQRLDERDTWAIETGGRYFVTRNDSSIVAFRMGRQSPLTGGIRMVGAHTDSPCLRVKPQPELQRQGFWQLGVEVYGGALLAPWFDRDLSLAGRVTFRRDGKVESQLIDFKLPIAVIPNLAIHLNRTANEGWAINAQNELPPILAQVAGDERADFRALLTDQLAREHGLNADVVLDYELSFYDTQSAAVVGLNGDFLAGARLDNLLSCYAGMQALLNSESDETALLVCTDHEEVGSSSTCGADGAMLEQIVQRLLPSSEDYVRTIQKSLLISADNAHGIHPNYAEKHDANHGPKLNAGPVIKVNSNQRYATNSETAGFFRHLCMAEEVPVQSFVVRSDMACGSTIGPITASHLGIRTVDIGLPTFAMHSIRELAGSHDLAHLVKVLSAFYASHELP</sequence>
<gene>
    <name evidence="1" type="primary">apeB</name>
    <name type="ordered locus">PSPPH_1599</name>
</gene>
<name>APEB_PSE14</name>
<comment type="cofactor">
    <cofactor evidence="1">
        <name>Zn(2+)</name>
        <dbReference type="ChEBI" id="CHEBI:29105"/>
    </cofactor>
</comment>
<comment type="similarity">
    <text evidence="1">Belongs to the peptidase M18 family.</text>
</comment>
<reference key="1">
    <citation type="journal article" date="2005" name="J. Bacteriol.">
        <title>Whole-genome sequence analysis of Pseudomonas syringae pv. phaseolicola 1448A reveals divergence among pathovars in genes involved in virulence and transposition.</title>
        <authorList>
            <person name="Joardar V."/>
            <person name="Lindeberg M."/>
            <person name="Jackson R.W."/>
            <person name="Selengut J."/>
            <person name="Dodson R."/>
            <person name="Brinkac L.M."/>
            <person name="Daugherty S.C."/>
            <person name="DeBoy R.T."/>
            <person name="Durkin A.S."/>
            <person name="Gwinn Giglio M."/>
            <person name="Madupu R."/>
            <person name="Nelson W.C."/>
            <person name="Rosovitz M.J."/>
            <person name="Sullivan S.A."/>
            <person name="Crabtree J."/>
            <person name="Creasy T."/>
            <person name="Davidsen T.M."/>
            <person name="Haft D.H."/>
            <person name="Zafar N."/>
            <person name="Zhou L."/>
            <person name="Halpin R."/>
            <person name="Holley T."/>
            <person name="Khouri H.M."/>
            <person name="Feldblyum T.V."/>
            <person name="White O."/>
            <person name="Fraser C.M."/>
            <person name="Chatterjee A.K."/>
            <person name="Cartinhour S."/>
            <person name="Schneider D."/>
            <person name="Mansfield J.W."/>
            <person name="Collmer A."/>
            <person name="Buell R."/>
        </authorList>
    </citation>
    <scope>NUCLEOTIDE SEQUENCE [LARGE SCALE GENOMIC DNA]</scope>
    <source>
        <strain>1448A / Race 6</strain>
    </source>
</reference>
<evidence type="ECO:0000255" key="1">
    <source>
        <dbReference type="HAMAP-Rule" id="MF_00467"/>
    </source>
</evidence>
<dbReference type="EC" id="3.4.11.-" evidence="1"/>
<dbReference type="EMBL" id="CP000058">
    <property type="protein sequence ID" value="AAZ33598.1"/>
    <property type="molecule type" value="Genomic_DNA"/>
</dbReference>
<dbReference type="RefSeq" id="WP_002552650.1">
    <property type="nucleotide sequence ID" value="NC_005773.3"/>
</dbReference>
<dbReference type="SMR" id="Q48L80"/>
<dbReference type="KEGG" id="psp:PSPPH_1599"/>
<dbReference type="eggNOG" id="COG1362">
    <property type="taxonomic scope" value="Bacteria"/>
</dbReference>
<dbReference type="HOGENOM" id="CLU_019532_2_0_6"/>
<dbReference type="Proteomes" id="UP000000551">
    <property type="component" value="Chromosome"/>
</dbReference>
<dbReference type="GO" id="GO:0005737">
    <property type="term" value="C:cytoplasm"/>
    <property type="evidence" value="ECO:0007669"/>
    <property type="project" value="UniProtKB-ARBA"/>
</dbReference>
<dbReference type="GO" id="GO:0004177">
    <property type="term" value="F:aminopeptidase activity"/>
    <property type="evidence" value="ECO:0007669"/>
    <property type="project" value="UniProtKB-UniRule"/>
</dbReference>
<dbReference type="GO" id="GO:0008237">
    <property type="term" value="F:metallopeptidase activity"/>
    <property type="evidence" value="ECO:0007669"/>
    <property type="project" value="UniProtKB-UniRule"/>
</dbReference>
<dbReference type="GO" id="GO:0008270">
    <property type="term" value="F:zinc ion binding"/>
    <property type="evidence" value="ECO:0007669"/>
    <property type="project" value="UniProtKB-UniRule"/>
</dbReference>
<dbReference type="GO" id="GO:0006508">
    <property type="term" value="P:proteolysis"/>
    <property type="evidence" value="ECO:0007669"/>
    <property type="project" value="UniProtKB-UniRule"/>
</dbReference>
<dbReference type="CDD" id="cd05658">
    <property type="entry name" value="M18_DAP"/>
    <property type="match status" value="1"/>
</dbReference>
<dbReference type="FunFam" id="2.30.250.10:FF:000003">
    <property type="entry name" value="Probable M18 family aminopeptidase 2"/>
    <property type="match status" value="1"/>
</dbReference>
<dbReference type="Gene3D" id="2.30.250.10">
    <property type="entry name" value="Aminopeptidase i, Domain 2"/>
    <property type="match status" value="1"/>
</dbReference>
<dbReference type="Gene3D" id="3.40.630.10">
    <property type="entry name" value="Zn peptidases"/>
    <property type="match status" value="1"/>
</dbReference>
<dbReference type="HAMAP" id="MF_00467">
    <property type="entry name" value="Aminopeptidase_M18_2"/>
    <property type="match status" value="1"/>
</dbReference>
<dbReference type="InterPro" id="IPR022984">
    <property type="entry name" value="M18_aminopeptidase_2"/>
</dbReference>
<dbReference type="InterPro" id="IPR001948">
    <property type="entry name" value="Peptidase_M18"/>
</dbReference>
<dbReference type="InterPro" id="IPR023358">
    <property type="entry name" value="Peptidase_M18_dom2"/>
</dbReference>
<dbReference type="NCBIfam" id="NF002759">
    <property type="entry name" value="PRK02813.1"/>
    <property type="match status" value="1"/>
</dbReference>
<dbReference type="PANTHER" id="PTHR28570">
    <property type="entry name" value="ASPARTYL AMINOPEPTIDASE"/>
    <property type="match status" value="1"/>
</dbReference>
<dbReference type="PANTHER" id="PTHR28570:SF3">
    <property type="entry name" value="ASPARTYL AMINOPEPTIDASE"/>
    <property type="match status" value="1"/>
</dbReference>
<dbReference type="Pfam" id="PF02127">
    <property type="entry name" value="Peptidase_M18"/>
    <property type="match status" value="1"/>
</dbReference>
<dbReference type="PRINTS" id="PR00932">
    <property type="entry name" value="AMINO1PTASE"/>
</dbReference>
<dbReference type="SUPFAM" id="SSF101821">
    <property type="entry name" value="Aminopeptidase/glucanase lid domain"/>
    <property type="match status" value="1"/>
</dbReference>
<dbReference type="SUPFAM" id="SSF53187">
    <property type="entry name" value="Zn-dependent exopeptidases"/>
    <property type="match status" value="1"/>
</dbReference>